<feature type="chain" id="PRO_0000098465" description="Isoleucine--tRNA ligase">
    <location>
        <begin position="1"/>
        <end position="917"/>
    </location>
</feature>
<feature type="short sequence motif" description="'HIGH' region">
    <location>
        <begin position="57"/>
        <end position="67"/>
    </location>
</feature>
<feature type="short sequence motif" description="'KMSKS' region">
    <location>
        <begin position="595"/>
        <end position="599"/>
    </location>
</feature>
<feature type="binding site" evidence="1">
    <location>
        <position position="554"/>
    </location>
    <ligand>
        <name>L-isoleucyl-5'-AMP</name>
        <dbReference type="ChEBI" id="CHEBI:178002"/>
    </ligand>
</feature>
<feature type="binding site" evidence="1">
    <location>
        <position position="598"/>
    </location>
    <ligand>
        <name>ATP</name>
        <dbReference type="ChEBI" id="CHEBI:30616"/>
    </ligand>
</feature>
<feature type="binding site" evidence="1">
    <location>
        <position position="886"/>
    </location>
    <ligand>
        <name>Zn(2+)</name>
        <dbReference type="ChEBI" id="CHEBI:29105"/>
    </ligand>
</feature>
<feature type="binding site" evidence="1">
    <location>
        <position position="889"/>
    </location>
    <ligand>
        <name>Zn(2+)</name>
        <dbReference type="ChEBI" id="CHEBI:29105"/>
    </ligand>
</feature>
<feature type="binding site" evidence="1">
    <location>
        <position position="906"/>
    </location>
    <ligand>
        <name>Zn(2+)</name>
        <dbReference type="ChEBI" id="CHEBI:29105"/>
    </ligand>
</feature>
<feature type="binding site" evidence="1">
    <location>
        <position position="909"/>
    </location>
    <ligand>
        <name>Zn(2+)</name>
        <dbReference type="ChEBI" id="CHEBI:29105"/>
    </ligand>
</feature>
<comment type="function">
    <text evidence="1">Catalyzes the attachment of isoleucine to tRNA(Ile). As IleRS can inadvertently accommodate and process structurally similar amino acids such as valine, to avoid such errors it has two additional distinct tRNA(Ile)-dependent editing activities. One activity is designated as 'pretransfer' editing and involves the hydrolysis of activated Val-AMP. The other activity is designated 'posttransfer' editing and involves deacylation of mischarged Val-tRNA(Ile) (By similarity).</text>
</comment>
<comment type="catalytic activity">
    <reaction>
        <text>tRNA(Ile) + L-isoleucine + ATP = L-isoleucyl-tRNA(Ile) + AMP + diphosphate</text>
        <dbReference type="Rhea" id="RHEA:11060"/>
        <dbReference type="Rhea" id="RHEA-COMP:9666"/>
        <dbReference type="Rhea" id="RHEA-COMP:9695"/>
        <dbReference type="ChEBI" id="CHEBI:30616"/>
        <dbReference type="ChEBI" id="CHEBI:33019"/>
        <dbReference type="ChEBI" id="CHEBI:58045"/>
        <dbReference type="ChEBI" id="CHEBI:78442"/>
        <dbReference type="ChEBI" id="CHEBI:78528"/>
        <dbReference type="ChEBI" id="CHEBI:456215"/>
        <dbReference type="EC" id="6.1.1.5"/>
    </reaction>
</comment>
<comment type="cofactor">
    <cofactor evidence="1">
        <name>Zn(2+)</name>
        <dbReference type="ChEBI" id="CHEBI:29105"/>
    </cofactor>
    <text evidence="1">Binds 1 zinc ion per subunit.</text>
</comment>
<comment type="subunit">
    <text evidence="1">Monomer.</text>
</comment>
<comment type="subcellular location">
    <subcellularLocation>
        <location evidence="1">Cytoplasm</location>
    </subcellularLocation>
</comment>
<comment type="domain">
    <text evidence="1">IleRS has two distinct active sites: one for aminoacylation and one for editing. The misactivated valine is translocated from the active site to the editing site, which sterically excludes the correctly activated isoleucine. The single editing site contains two valyl binding pockets, one specific for each substrate (Val-AMP or Val-tRNA(Ile)) (By similarity).</text>
</comment>
<comment type="similarity">
    <text evidence="2">Belongs to the class-I aminoacyl-tRNA synthetase family. IleS type 1 subfamily.</text>
</comment>
<evidence type="ECO:0000250" key="1"/>
<evidence type="ECO:0000305" key="2"/>
<protein>
    <recommendedName>
        <fullName>Isoleucine--tRNA ligase</fullName>
        <ecNumber>6.1.1.5</ecNumber>
    </recommendedName>
    <alternativeName>
        <fullName>Isoleucyl-tRNA synthetase</fullName>
        <shortName>IleRS</shortName>
    </alternativeName>
</protein>
<organism>
    <name type="scientific">Staphylococcus aureus (strain MRSA252)</name>
    <dbReference type="NCBI Taxonomy" id="282458"/>
    <lineage>
        <taxon>Bacteria</taxon>
        <taxon>Bacillati</taxon>
        <taxon>Bacillota</taxon>
        <taxon>Bacilli</taxon>
        <taxon>Bacillales</taxon>
        <taxon>Staphylococcaceae</taxon>
        <taxon>Staphylococcus</taxon>
    </lineage>
</organism>
<reference key="1">
    <citation type="journal article" date="2004" name="Proc. Natl. Acad. Sci. U.S.A.">
        <title>Complete genomes of two clinical Staphylococcus aureus strains: evidence for the rapid evolution of virulence and drug resistance.</title>
        <authorList>
            <person name="Holden M.T.G."/>
            <person name="Feil E.J."/>
            <person name="Lindsay J.A."/>
            <person name="Peacock S.J."/>
            <person name="Day N.P.J."/>
            <person name="Enright M.C."/>
            <person name="Foster T.J."/>
            <person name="Moore C.E."/>
            <person name="Hurst L."/>
            <person name="Atkin R."/>
            <person name="Barron A."/>
            <person name="Bason N."/>
            <person name="Bentley S.D."/>
            <person name="Chillingworth C."/>
            <person name="Chillingworth T."/>
            <person name="Churcher C."/>
            <person name="Clark L."/>
            <person name="Corton C."/>
            <person name="Cronin A."/>
            <person name="Doggett J."/>
            <person name="Dowd L."/>
            <person name="Feltwell T."/>
            <person name="Hance Z."/>
            <person name="Harris B."/>
            <person name="Hauser H."/>
            <person name="Holroyd S."/>
            <person name="Jagels K."/>
            <person name="James K.D."/>
            <person name="Lennard N."/>
            <person name="Line A."/>
            <person name="Mayes R."/>
            <person name="Moule S."/>
            <person name="Mungall K."/>
            <person name="Ormond D."/>
            <person name="Quail M.A."/>
            <person name="Rabbinowitsch E."/>
            <person name="Rutherford K.M."/>
            <person name="Sanders M."/>
            <person name="Sharp S."/>
            <person name="Simmonds M."/>
            <person name="Stevens K."/>
            <person name="Whitehead S."/>
            <person name="Barrell B.G."/>
            <person name="Spratt B.G."/>
            <person name="Parkhill J."/>
        </authorList>
    </citation>
    <scope>NUCLEOTIDE SEQUENCE [LARGE SCALE GENOMIC DNA]</scope>
    <source>
        <strain>MRSA252</strain>
    </source>
</reference>
<gene>
    <name type="primary">ileS</name>
    <name type="ordered locus">SAR1169</name>
</gene>
<proteinExistence type="inferred from homology"/>
<keyword id="KW-0030">Aminoacyl-tRNA synthetase</keyword>
<keyword id="KW-0067">ATP-binding</keyword>
<keyword id="KW-0963">Cytoplasm</keyword>
<keyword id="KW-0436">Ligase</keyword>
<keyword id="KW-0479">Metal-binding</keyword>
<keyword id="KW-0547">Nucleotide-binding</keyword>
<keyword id="KW-0648">Protein biosynthesis</keyword>
<keyword id="KW-0862">Zinc</keyword>
<sequence length="917" mass="104885">MDYKETLLMPKTDFPMRGGLPNKEPQIQEKWDAEDQYHKALEKNKGNETFILHDGPPYANGNLHMGHALNKILKDFIVRYKTMQGFYAPYVPGWDTHGLPIEQALTKKGVDRKKMSTAEFREKCKEFALEQIELQKKDFRRLGVRGDFNDPYITLKPEYEAAQIRIFGEMADKGLIYKGKKPVYWSPSSESSLAEAEIEYHDKRSASIYVAFNVKDDKGVVDADAKFIIWTTTPWTIPSNVAITVHPELKYGQYNVNGEKYIIAEALSDAVAEALDWDKASIKLEKEYTGKELEYVVAQHPFLDRESLVINGDHVTTDAGTGCVHTAPGHGEDDYIVGQKYELPVISPIDDKGVFTEEGGQFEGMFYDKANKAVTDLLTEKGALLKLDFITHSYPHDWRTKKPVIFRATPQWFASISKVRQDILDAIENTNFKVNWGKTRIYNMVRDRGEWVISRQRVWGVPLPVFYAENGEIIMTKETVNHVADLFAEHGSNIWFEREAKDLLPEGFTHPGSPNGTFTKETDIMDVWFDSGSSHRGVLETRPELSFPADMYLEGSDQYRGWFNSSITTSVATRGVSPYKFLLSHGFVMDGEGKKMSKSLGNVIVPDQVVKQKGADIARLWVSSTDYLADVRISDEILKQTSDVYRKIRNTLRFMLGNINDFNPDTDSIPESELLEVDRYLLNRLREFTASTINNYENFDYLNIYQEVQNFINVELSNFYLDYGKDILYIEQRDSHIRRSMQTVLYQILVDMTKLLAPILVHTAEEVWSHTPHVKEESVHLADMPKVVEVDQALLDKWRTFMNLRDDVNRALETARNEKVIGKSLEAKVTIASNDKFNASEFLTSFDALHQLFIVSQVKVVDKLDDQATAYEHGDIVIEHADGEKCERCWNYSEDLGAVDELTHLCPRCQQVVKSLV</sequence>
<dbReference type="EC" id="6.1.1.5"/>
<dbReference type="EMBL" id="BX571856">
    <property type="protein sequence ID" value="CAG40171.1"/>
    <property type="molecule type" value="Genomic_DNA"/>
</dbReference>
<dbReference type="RefSeq" id="WP_000384706.1">
    <property type="nucleotide sequence ID" value="NC_002952.2"/>
</dbReference>
<dbReference type="SMR" id="Q6GHP2"/>
<dbReference type="KEGG" id="sar:SAR1169"/>
<dbReference type="HOGENOM" id="CLU_001493_7_1_9"/>
<dbReference type="Proteomes" id="UP000000596">
    <property type="component" value="Chromosome"/>
</dbReference>
<dbReference type="GO" id="GO:0005829">
    <property type="term" value="C:cytosol"/>
    <property type="evidence" value="ECO:0007669"/>
    <property type="project" value="TreeGrafter"/>
</dbReference>
<dbReference type="GO" id="GO:0002161">
    <property type="term" value="F:aminoacyl-tRNA deacylase activity"/>
    <property type="evidence" value="ECO:0007669"/>
    <property type="project" value="InterPro"/>
</dbReference>
<dbReference type="GO" id="GO:0005524">
    <property type="term" value="F:ATP binding"/>
    <property type="evidence" value="ECO:0007669"/>
    <property type="project" value="UniProtKB-UniRule"/>
</dbReference>
<dbReference type="GO" id="GO:0004822">
    <property type="term" value="F:isoleucine-tRNA ligase activity"/>
    <property type="evidence" value="ECO:0007669"/>
    <property type="project" value="UniProtKB-UniRule"/>
</dbReference>
<dbReference type="GO" id="GO:0000049">
    <property type="term" value="F:tRNA binding"/>
    <property type="evidence" value="ECO:0007669"/>
    <property type="project" value="InterPro"/>
</dbReference>
<dbReference type="GO" id="GO:0008270">
    <property type="term" value="F:zinc ion binding"/>
    <property type="evidence" value="ECO:0007669"/>
    <property type="project" value="UniProtKB-UniRule"/>
</dbReference>
<dbReference type="GO" id="GO:0006428">
    <property type="term" value="P:isoleucyl-tRNA aminoacylation"/>
    <property type="evidence" value="ECO:0007669"/>
    <property type="project" value="UniProtKB-UniRule"/>
</dbReference>
<dbReference type="CDD" id="cd07960">
    <property type="entry name" value="Anticodon_Ia_Ile_BEm"/>
    <property type="match status" value="1"/>
</dbReference>
<dbReference type="CDD" id="cd00818">
    <property type="entry name" value="IleRS_core"/>
    <property type="match status" value="1"/>
</dbReference>
<dbReference type="FunFam" id="1.10.10.830:FF:000001">
    <property type="entry name" value="Isoleucine--tRNA ligase"/>
    <property type="match status" value="1"/>
</dbReference>
<dbReference type="FunFam" id="1.10.730.20:FF:000001">
    <property type="entry name" value="Isoleucine--tRNA ligase"/>
    <property type="match status" value="1"/>
</dbReference>
<dbReference type="FunFam" id="3.40.50.620:FF:000152">
    <property type="entry name" value="Isoleucine--tRNA ligase"/>
    <property type="match status" value="1"/>
</dbReference>
<dbReference type="FunFam" id="3.90.740.10:FF:000006">
    <property type="entry name" value="Isoleucine--tRNA ligase"/>
    <property type="match status" value="1"/>
</dbReference>
<dbReference type="Gene3D" id="1.10.730.20">
    <property type="match status" value="1"/>
</dbReference>
<dbReference type="Gene3D" id="3.40.50.620">
    <property type="entry name" value="HUPs"/>
    <property type="match status" value="2"/>
</dbReference>
<dbReference type="Gene3D" id="1.10.10.830">
    <property type="entry name" value="Ile-tRNA synthetase CP2 domain-like"/>
    <property type="match status" value="1"/>
</dbReference>
<dbReference type="HAMAP" id="MF_02002">
    <property type="entry name" value="Ile_tRNA_synth_type1"/>
    <property type="match status" value="1"/>
</dbReference>
<dbReference type="InterPro" id="IPR001412">
    <property type="entry name" value="aa-tRNA-synth_I_CS"/>
</dbReference>
<dbReference type="InterPro" id="IPR002300">
    <property type="entry name" value="aa-tRNA-synth_Ia"/>
</dbReference>
<dbReference type="InterPro" id="IPR033708">
    <property type="entry name" value="Anticodon_Ile_BEm"/>
</dbReference>
<dbReference type="InterPro" id="IPR002301">
    <property type="entry name" value="Ile-tRNA-ligase"/>
</dbReference>
<dbReference type="InterPro" id="IPR023585">
    <property type="entry name" value="Ile-tRNA-ligase_type1"/>
</dbReference>
<dbReference type="InterPro" id="IPR050081">
    <property type="entry name" value="Ile-tRNA_ligase"/>
</dbReference>
<dbReference type="InterPro" id="IPR013155">
    <property type="entry name" value="M/V/L/I-tRNA-synth_anticd-bd"/>
</dbReference>
<dbReference type="InterPro" id="IPR014729">
    <property type="entry name" value="Rossmann-like_a/b/a_fold"/>
</dbReference>
<dbReference type="InterPro" id="IPR009080">
    <property type="entry name" value="tRNAsynth_Ia_anticodon-bd"/>
</dbReference>
<dbReference type="InterPro" id="IPR009008">
    <property type="entry name" value="Val/Leu/Ile-tRNA-synth_edit"/>
</dbReference>
<dbReference type="InterPro" id="IPR010663">
    <property type="entry name" value="Znf_FPG/IleRS"/>
</dbReference>
<dbReference type="NCBIfam" id="TIGR00392">
    <property type="entry name" value="ileS"/>
    <property type="match status" value="1"/>
</dbReference>
<dbReference type="PANTHER" id="PTHR42765:SF1">
    <property type="entry name" value="ISOLEUCINE--TRNA LIGASE, MITOCHONDRIAL"/>
    <property type="match status" value="1"/>
</dbReference>
<dbReference type="PANTHER" id="PTHR42765">
    <property type="entry name" value="SOLEUCYL-TRNA SYNTHETASE"/>
    <property type="match status" value="1"/>
</dbReference>
<dbReference type="Pfam" id="PF08264">
    <property type="entry name" value="Anticodon_1"/>
    <property type="match status" value="1"/>
</dbReference>
<dbReference type="Pfam" id="PF00133">
    <property type="entry name" value="tRNA-synt_1"/>
    <property type="match status" value="1"/>
</dbReference>
<dbReference type="Pfam" id="PF06827">
    <property type="entry name" value="zf-FPG_IleRS"/>
    <property type="match status" value="1"/>
</dbReference>
<dbReference type="PRINTS" id="PR00984">
    <property type="entry name" value="TRNASYNTHILE"/>
</dbReference>
<dbReference type="SUPFAM" id="SSF47323">
    <property type="entry name" value="Anticodon-binding domain of a subclass of class I aminoacyl-tRNA synthetases"/>
    <property type="match status" value="1"/>
</dbReference>
<dbReference type="SUPFAM" id="SSF52374">
    <property type="entry name" value="Nucleotidylyl transferase"/>
    <property type="match status" value="1"/>
</dbReference>
<dbReference type="SUPFAM" id="SSF50677">
    <property type="entry name" value="ValRS/IleRS/LeuRS editing domain"/>
    <property type="match status" value="1"/>
</dbReference>
<dbReference type="PROSITE" id="PS00178">
    <property type="entry name" value="AA_TRNA_LIGASE_I"/>
    <property type="match status" value="1"/>
</dbReference>
<accession>Q6GHP2</accession>
<name>SYI_STAAR</name>